<sequence>MNSKIIRFENLRSFFKDGMTIMIGGFLNCGTPTKLIDFLVNLNIKNLTIISNDTCYPNTGIGKLISNNQVKKLIASYIGSNPDTGKKLFNNELEVELSPQGTLVERIRAGGSGLGGVLTKTGLGTLIEKGKKKISINGTEYLLELPLTADVALIKGSIVDEAGNTFYKGTTKNFNPYMAMAAKTVIVEAENLVSCEKLEKEKAMTPGVLINYIVKEPA</sequence>
<keyword id="KW-0903">Direct protein sequencing</keyword>
<keyword id="KW-0614">Plasmid</keyword>
<keyword id="KW-1185">Reference proteome</keyword>
<keyword id="KW-0808">Transferase</keyword>
<name>CTFA_CLOAB</name>
<dbReference type="EC" id="2.8.3.9" evidence="2 3"/>
<dbReference type="EMBL" id="X72831">
    <property type="protein sequence ID" value="CAA51345.1"/>
    <property type="molecule type" value="Genomic_DNA"/>
</dbReference>
<dbReference type="EMBL" id="M93363">
    <property type="protein sequence ID" value="AAB53234.1"/>
    <property type="molecule type" value="Genomic_DNA"/>
</dbReference>
<dbReference type="EMBL" id="AE001438">
    <property type="protein sequence ID" value="AAK76908.1"/>
    <property type="molecule type" value="Genomic_DNA"/>
</dbReference>
<dbReference type="EMBL" id="L14817">
    <property type="status" value="NOT_ANNOTATED_CDS"/>
    <property type="molecule type" value="Genomic_DNA"/>
</dbReference>
<dbReference type="PIR" id="B49346">
    <property type="entry name" value="B49346"/>
</dbReference>
<dbReference type="RefSeq" id="NP_149326.1">
    <property type="nucleotide sequence ID" value="NC_001988.2"/>
</dbReference>
<dbReference type="RefSeq" id="WP_010890847.1">
    <property type="nucleotide sequence ID" value="NC_001988.2"/>
</dbReference>
<dbReference type="SMR" id="P33752"/>
<dbReference type="GeneID" id="45000388"/>
<dbReference type="KEGG" id="cac:CA_P0163"/>
<dbReference type="PATRIC" id="fig|272562.8.peg.164"/>
<dbReference type="HOGENOM" id="CLU_019942_2_1_9"/>
<dbReference type="OrthoDB" id="9777193at2"/>
<dbReference type="BioCyc" id="MetaCyc:COATACLOS-MONOMER"/>
<dbReference type="SABIO-RK" id="P33752"/>
<dbReference type="Proteomes" id="UP000000814">
    <property type="component" value="Plasmid pSOL1"/>
</dbReference>
<dbReference type="GO" id="GO:0047371">
    <property type="term" value="F:butyrate-acetoacetate CoA-transferase activity"/>
    <property type="evidence" value="ECO:0007669"/>
    <property type="project" value="UniProtKB-EC"/>
</dbReference>
<dbReference type="GO" id="GO:0008410">
    <property type="term" value="F:CoA-transferase activity"/>
    <property type="evidence" value="ECO:0000315"/>
    <property type="project" value="MENGO"/>
</dbReference>
<dbReference type="Gene3D" id="3.40.1080.10">
    <property type="entry name" value="Glutaconate Coenzyme A-transferase"/>
    <property type="match status" value="1"/>
</dbReference>
<dbReference type="InterPro" id="IPR012792">
    <property type="entry name" value="3-oxoacid_CoA-transf_A"/>
</dbReference>
<dbReference type="InterPro" id="IPR004165">
    <property type="entry name" value="CoA_trans_fam_I"/>
</dbReference>
<dbReference type="InterPro" id="IPR004163">
    <property type="entry name" value="CoA_transf_BS"/>
</dbReference>
<dbReference type="InterPro" id="IPR037171">
    <property type="entry name" value="NagB/RpiA_transferase-like"/>
</dbReference>
<dbReference type="NCBIfam" id="TIGR02429">
    <property type="entry name" value="pcaI_scoA_fam"/>
    <property type="match status" value="1"/>
</dbReference>
<dbReference type="PANTHER" id="PTHR13707:SF60">
    <property type="entry name" value="ACETATE COA-TRANSFERASE SUBUNIT ALPHA"/>
    <property type="match status" value="1"/>
</dbReference>
<dbReference type="PANTHER" id="PTHR13707">
    <property type="entry name" value="KETOACID-COENZYME A TRANSFERASE"/>
    <property type="match status" value="1"/>
</dbReference>
<dbReference type="Pfam" id="PF01144">
    <property type="entry name" value="CoA_trans"/>
    <property type="match status" value="1"/>
</dbReference>
<dbReference type="SMART" id="SM00882">
    <property type="entry name" value="CoA_trans"/>
    <property type="match status" value="1"/>
</dbReference>
<dbReference type="SUPFAM" id="SSF100950">
    <property type="entry name" value="NagB/RpiA/CoA transferase-like"/>
    <property type="match status" value="1"/>
</dbReference>
<dbReference type="PROSITE" id="PS01273">
    <property type="entry name" value="COA_TRANSF_1"/>
    <property type="match status" value="1"/>
</dbReference>
<feature type="chain" id="PRO_0000157914" description="Acetoacetyl-CoA:acetate/butyrate CoA transferase alpha subunit">
    <location>
        <begin position="1"/>
        <end position="218"/>
    </location>
</feature>
<feature type="binding site" evidence="1">
    <location>
        <begin position="24"/>
        <end position="30"/>
    </location>
    <ligand>
        <name>CoA</name>
        <dbReference type="ChEBI" id="CHEBI:57287"/>
    </ligand>
</feature>
<feature type="sequence conflict" description="In Ref. 2; AAB53234." evidence="8" ref="2">
    <original>V</original>
    <variation>I</variation>
    <location>
        <position position="151"/>
    </location>
</feature>
<organism>
    <name type="scientific">Clostridium acetobutylicum (strain ATCC 824 / DSM 792 / JCM 1419 / IAM 19013 / LMG 5710 / NBRC 13948 / NRRL B-527 / VKM B-1787 / 2291 / W)</name>
    <dbReference type="NCBI Taxonomy" id="272562"/>
    <lineage>
        <taxon>Bacteria</taxon>
        <taxon>Bacillati</taxon>
        <taxon>Bacillota</taxon>
        <taxon>Clostridia</taxon>
        <taxon>Eubacteriales</taxon>
        <taxon>Clostridiaceae</taxon>
        <taxon>Clostridium</taxon>
    </lineage>
</organism>
<geneLocation type="plasmid">
    <name>pSOL1</name>
</geneLocation>
<proteinExistence type="evidence at protein level"/>
<gene>
    <name evidence="7" type="primary">ctfA</name>
    <name type="ordered locus">CA_P0163</name>
</gene>
<comment type="function">
    <text evidence="2 3 5 6">Catalyzes the transfer of CoA from acetoacetyl-CoA to acetate, butyrate and propionate (PubMed:2383002, PubMed:2719476). Also shows low activity with valerate, isobutyrate and crotonate (PubMed:2719476). Plays an important role in the metabolic shift between the acid-producing and solvent-forming states of C.acetobutylicum (PubMed:2383002). Acts mainly to detoxify the medium by removing the acetate and butyrate excreted earlier in the fermentation (PubMed:2383002, PubMed:2719476).</text>
</comment>
<comment type="catalytic activity">
    <reaction evidence="2 3">
        <text>acetoacetate + butanoyl-CoA = acetoacetyl-CoA + butanoate</text>
        <dbReference type="Rhea" id="RHEA:12961"/>
        <dbReference type="ChEBI" id="CHEBI:13705"/>
        <dbReference type="ChEBI" id="CHEBI:17968"/>
        <dbReference type="ChEBI" id="CHEBI:57286"/>
        <dbReference type="ChEBI" id="CHEBI:57371"/>
        <dbReference type="EC" id="2.8.3.9"/>
    </reaction>
    <physiologicalReaction direction="right-to-left" evidence="3">
        <dbReference type="Rhea" id="RHEA:12963"/>
    </physiologicalReaction>
</comment>
<comment type="catalytic activity">
    <reaction evidence="2 3">
        <text>acetoacetate + acetyl-CoA = acetoacetyl-CoA + acetate</text>
        <dbReference type="Rhea" id="RHEA:27806"/>
        <dbReference type="ChEBI" id="CHEBI:13705"/>
        <dbReference type="ChEBI" id="CHEBI:30089"/>
        <dbReference type="ChEBI" id="CHEBI:57286"/>
        <dbReference type="ChEBI" id="CHEBI:57288"/>
    </reaction>
    <physiologicalReaction direction="right-to-left" evidence="3">
        <dbReference type="Rhea" id="RHEA:27808"/>
    </physiologicalReaction>
</comment>
<comment type="activity regulation">
    <text evidence="3">The acetate and butyrate conversion reactions are inhibited in vitro by physiological levels of acetone and butanol.</text>
</comment>
<comment type="biophysicochemical properties">
    <kinetics>
        <KM evidence="3">1200 mM for acetate</KM>
        <KM evidence="3">660 mM for butyrate</KM>
        <KM evidence="3">1000 mM for propionate</KM>
        <KM evidence="3">0.021 mM for acetoacetyl-CoA (in the presence of acetate)</KM>
        <KM evidence="3">0.056 mM for acetoacetyl-CoA (in the presence of butyrate)</KM>
        <KM evidence="3">0.007 mM for acetoacetyl-CoA (in the presence of propionate)</KM>
    </kinetics>
    <phDependence>
        <text evidence="3">Shows at least 80% of maximal activity from pH 5.9 to greater than 7.8 for acetate conversion.</text>
    </phDependence>
</comment>
<comment type="subunit">
    <text evidence="3">Heterotetramer composed of two alpha subunits (CtfA) and two beta subunits (CtfB).</text>
</comment>
<comment type="induction">
    <text evidence="4">Transcriptionally induced or derepressed before the onset of solventogenesis.</text>
</comment>
<comment type="similarity">
    <text evidence="8">Belongs to the 3-oxoacid CoA-transferase subunit A family.</text>
</comment>
<evidence type="ECO:0000255" key="1"/>
<evidence type="ECO:0000269" key="2">
    <source>
    </source>
</evidence>
<evidence type="ECO:0000269" key="3">
    <source>
    </source>
</evidence>
<evidence type="ECO:0000269" key="4">
    <source>
    </source>
</evidence>
<evidence type="ECO:0000303" key="5">
    <source>
    </source>
</evidence>
<evidence type="ECO:0000303" key="6">
    <source>
    </source>
</evidence>
<evidence type="ECO:0000303" key="7">
    <source>
    </source>
</evidence>
<evidence type="ECO:0000305" key="8"/>
<protein>
    <recommendedName>
        <fullName evidence="8">Acetoacetyl-CoA:acetate/butyrate CoA transferase alpha subunit</fullName>
        <ecNumber evidence="2 3">2.8.3.9</ecNumber>
    </recommendedName>
    <alternativeName>
        <fullName evidence="5">Butyrate--acetoacetate CoA-transferase subunit A</fullName>
        <shortName>Coat A</shortName>
    </alternativeName>
</protein>
<reference key="1">
    <citation type="journal article" date="1993" name="J. Bacteriol.">
        <title>Cloning, sequencing, and molecular analysis of the sol operon of Clostridium acetobutylicum, a chromosomal locus involved in solventogenesis.</title>
        <authorList>
            <person name="Fischer R.J."/>
            <person name="Helms J."/>
            <person name="Duerre P."/>
        </authorList>
    </citation>
    <scope>NUCLEOTIDE SEQUENCE [GENOMIC DNA]</scope>
    <scope>INDUCTION</scope>
    <source>
        <strain>ATCC 824 / DSM 792 / JCM 1419 / IAM 19013 / LMG 5710 / NBRC 13948 / NRRL B-527 / VKM B-1787 / 2291 / W</strain>
    </source>
</reference>
<reference key="2">
    <citation type="journal article" date="1993" name="Gene">
        <title>Sequence and arrangement of genes encoding enzymes of the acetone-production pathway of Clostridium acetobutylicum ATCC824.</title>
        <authorList>
            <person name="Petersen D.J."/>
            <person name="Cary J.W."/>
            <person name="Vanderleyden J."/>
            <person name="Bennett G.N."/>
        </authorList>
    </citation>
    <scope>NUCLEOTIDE SEQUENCE [GENOMIC DNA]</scope>
    <scope>PROTEIN SEQUENCE OF 1-20</scope>
    <source>
        <strain>ATCC 824 / DSM 792 / JCM 1419 / IAM 19013 / LMG 5710 / NBRC 13948 / NRRL B-527 / VKM B-1787 / 2291 / W</strain>
    </source>
</reference>
<reference key="3">
    <citation type="submission" date="1997-04" db="EMBL/GenBank/DDBJ databases">
        <authorList>
            <person name="Petersen D.J."/>
            <person name="Bennett G.N."/>
        </authorList>
    </citation>
    <scope>SEQUENCE REVISION TO C-TERMINUS</scope>
</reference>
<reference key="4">
    <citation type="journal article" date="2001" name="J. Bacteriol.">
        <title>Genome sequence and comparative analysis of the solvent-producing bacterium Clostridium acetobutylicum.</title>
        <authorList>
            <person name="Noelling J."/>
            <person name="Breton G."/>
            <person name="Omelchenko M.V."/>
            <person name="Makarova K.S."/>
            <person name="Zeng Q."/>
            <person name="Gibson R."/>
            <person name="Lee H.M."/>
            <person name="Dubois J."/>
            <person name="Qiu D."/>
            <person name="Hitti J."/>
            <person name="Wolf Y.I."/>
            <person name="Tatusov R.L."/>
            <person name="Sabathe F."/>
            <person name="Doucette-Stamm L.A."/>
            <person name="Soucaille P."/>
            <person name="Daly M.J."/>
            <person name="Bennett G.N."/>
            <person name="Koonin E.V."/>
            <person name="Smith D.R."/>
        </authorList>
    </citation>
    <scope>NUCLEOTIDE SEQUENCE [LARGE SCALE GENOMIC DNA]</scope>
    <source>
        <strain>ATCC 824 / DSM 792 / JCM 1419 / IAM 19013 / LMG 5710 / NBRC 13948 / NRRL B-527 / VKM B-1787 / 2291 / W</strain>
    </source>
</reference>
<reference key="5">
    <citation type="journal article" date="1994" name="J. Bacteriol.">
        <title>Molecular characterization of an aldehyde/alcohol dehydrogenase gene from Clostridium acetobutylicum ATCC 824.</title>
        <authorList>
            <person name="Nair R.V."/>
            <person name="Bennett G.N."/>
            <person name="Papoutsakis E.T."/>
        </authorList>
    </citation>
    <scope>NUCLEOTIDE SEQUENCE [GENOMIC DNA] OF 1-29</scope>
</reference>
<reference key="6">
    <citation type="journal article" date="1990" name="Appl. Environ. Microbiol.">
        <title>Cloning and expression of Clostridium acetobutylicum ATCC 824 acetoacetyl-coenzyme A:acetate/butyrate:coenzyme A-transferase in Escherichia coli.</title>
        <authorList>
            <person name="Cary J.W."/>
            <person name="Petersen D.J."/>
            <person name="Papoutsakis E.T."/>
            <person name="Bennett G.N."/>
        </authorList>
    </citation>
    <scope>PROTEIN SEQUENCE OF 1-14</scope>
    <scope>FUNCTION</scope>
    <scope>CATALYTIC ACTIVITY</scope>
    <source>
        <strain>ATCC 824 / DSM 792 / JCM 1419 / IAM 19013 / LMG 5710 / NBRC 13948 / NRRL B-527 / VKM B-1787 / 2291 / W</strain>
    </source>
</reference>
<reference key="7">
    <citation type="journal article" date="1989" name="Appl. Environ. Microbiol.">
        <title>Coenzyme A transferase from Clostridium acetobutylicum ATCC 824 and its role in the uptake of acids.</title>
        <authorList>
            <person name="Wiesenborn D.P."/>
            <person name="Rudolph F.B."/>
            <person name="Papoutsakis E.T."/>
        </authorList>
    </citation>
    <scope>FUNCTION</scope>
    <scope>CATALYTIC ACTIVITY</scope>
    <scope>ACTIVITY REGULATION</scope>
    <scope>BIOPHYSICOCHEMICAL PROPERTIES</scope>
    <scope>SUBUNIT</scope>
    <source>
        <strain>ATCC 824 / DSM 792 / JCM 1419 / IAM 19013 / LMG 5710 / NBRC 13948 / NRRL B-527 / VKM B-1787 / 2291 / W</strain>
    </source>
</reference>
<accession>P33752</accession>
<accession>O06494</accession>